<proteinExistence type="inferred from homology"/>
<accession>Q9HDX5</accession>
<protein>
    <recommendedName>
        <fullName>Protein arv1</fullName>
    </recommendedName>
</protein>
<gene>
    <name type="primary">arv1</name>
    <name type="ORF">SPAPB1A10.15</name>
</gene>
<evidence type="ECO:0000250" key="1"/>
<evidence type="ECO:0000255" key="2"/>
<evidence type="ECO:0000305" key="3"/>
<feature type="chain" id="PRO_0000310327" description="Protein arv1">
    <location>
        <begin position="1"/>
        <end position="266"/>
    </location>
</feature>
<feature type="transmembrane region" description="Helical" evidence="2">
    <location>
        <begin position="71"/>
        <end position="91"/>
    </location>
</feature>
<feature type="transmembrane region" description="Helical" evidence="2">
    <location>
        <begin position="122"/>
        <end position="142"/>
    </location>
</feature>
<feature type="transmembrane region" description="Helical" evidence="2">
    <location>
        <begin position="153"/>
        <end position="173"/>
    </location>
</feature>
<feature type="transmembrane region" description="Helical" evidence="2">
    <location>
        <begin position="179"/>
        <end position="199"/>
    </location>
</feature>
<feature type="transmembrane region" description="Helical" evidence="2">
    <location>
        <begin position="208"/>
        <end position="228"/>
    </location>
</feature>
<dbReference type="EMBL" id="CU329670">
    <property type="protein sequence ID" value="CAC21488.3"/>
    <property type="molecule type" value="Genomic_DNA"/>
</dbReference>
<dbReference type="RefSeq" id="NP_593529.3">
    <property type="nucleotide sequence ID" value="NM_001018963.3"/>
</dbReference>
<dbReference type="BioGRID" id="279847">
    <property type="interactions" value="25"/>
</dbReference>
<dbReference type="FunCoup" id="Q9HDX5">
    <property type="interactions" value="361"/>
</dbReference>
<dbReference type="STRING" id="284812.Q9HDX5"/>
<dbReference type="PaxDb" id="4896-SPAPB1A10.15.1"/>
<dbReference type="EnsemblFungi" id="SPAPB1A10.15.1">
    <property type="protein sequence ID" value="SPAPB1A10.15.1:pep"/>
    <property type="gene ID" value="SPAPB1A10.15"/>
</dbReference>
<dbReference type="GeneID" id="2543427"/>
<dbReference type="KEGG" id="spo:2543427"/>
<dbReference type="PomBase" id="SPAPB1A10.15">
    <property type="gene designation" value="arv1"/>
</dbReference>
<dbReference type="VEuPathDB" id="FungiDB:SPAPB1A10.15"/>
<dbReference type="eggNOG" id="KOG3134">
    <property type="taxonomic scope" value="Eukaryota"/>
</dbReference>
<dbReference type="HOGENOM" id="CLU_057366_0_0_1"/>
<dbReference type="InParanoid" id="Q9HDX5"/>
<dbReference type="OMA" id="MLDMNVK"/>
<dbReference type="Reactome" id="R-SPO-191273">
    <property type="pathway name" value="Cholesterol biosynthesis"/>
</dbReference>
<dbReference type="PRO" id="PR:Q9HDX5"/>
<dbReference type="Proteomes" id="UP000002485">
    <property type="component" value="Chromosome I"/>
</dbReference>
<dbReference type="GO" id="GO:0032541">
    <property type="term" value="C:cortical endoplasmic reticulum"/>
    <property type="evidence" value="ECO:0000318"/>
    <property type="project" value="GO_Central"/>
</dbReference>
<dbReference type="GO" id="GO:0005789">
    <property type="term" value="C:endoplasmic reticulum membrane"/>
    <property type="evidence" value="ECO:0000305"/>
    <property type="project" value="PomBase"/>
</dbReference>
<dbReference type="GO" id="GO:0005794">
    <property type="term" value="C:Golgi apparatus"/>
    <property type="evidence" value="ECO:0000318"/>
    <property type="project" value="GO_Central"/>
</dbReference>
<dbReference type="GO" id="GO:0000139">
    <property type="term" value="C:Golgi membrane"/>
    <property type="evidence" value="ECO:0007669"/>
    <property type="project" value="UniProtKB-SubCell"/>
</dbReference>
<dbReference type="GO" id="GO:0032366">
    <property type="term" value="P:intracellular sterol transport"/>
    <property type="evidence" value="ECO:0000318"/>
    <property type="project" value="GO_Central"/>
</dbReference>
<dbReference type="GO" id="GO:0097036">
    <property type="term" value="P:regulation of plasma membrane sterol distribution"/>
    <property type="evidence" value="ECO:0000318"/>
    <property type="project" value="GO_Central"/>
</dbReference>
<dbReference type="GO" id="GO:0006665">
    <property type="term" value="P:sphingolipid metabolic process"/>
    <property type="evidence" value="ECO:0000318"/>
    <property type="project" value="GO_Central"/>
</dbReference>
<dbReference type="GO" id="GO:0016125">
    <property type="term" value="P:sterol metabolic process"/>
    <property type="evidence" value="ECO:0000318"/>
    <property type="project" value="GO_Central"/>
</dbReference>
<dbReference type="InterPro" id="IPR007290">
    <property type="entry name" value="Arv1"/>
</dbReference>
<dbReference type="PANTHER" id="PTHR14467">
    <property type="entry name" value="ARV1"/>
    <property type="match status" value="1"/>
</dbReference>
<dbReference type="PANTHER" id="PTHR14467:SF0">
    <property type="entry name" value="PROTEIN ARV1"/>
    <property type="match status" value="1"/>
</dbReference>
<dbReference type="Pfam" id="PF04161">
    <property type="entry name" value="Arv1"/>
    <property type="match status" value="1"/>
</dbReference>
<name>ARV1_SCHPO</name>
<reference key="1">
    <citation type="journal article" date="2002" name="Nature">
        <title>The genome sequence of Schizosaccharomyces pombe.</title>
        <authorList>
            <person name="Wood V."/>
            <person name="Gwilliam R."/>
            <person name="Rajandream M.A."/>
            <person name="Lyne M.H."/>
            <person name="Lyne R."/>
            <person name="Stewart A."/>
            <person name="Sgouros J.G."/>
            <person name="Peat N."/>
            <person name="Hayles J."/>
            <person name="Baker S.G."/>
            <person name="Basham D."/>
            <person name="Bowman S."/>
            <person name="Brooks K."/>
            <person name="Brown D."/>
            <person name="Brown S."/>
            <person name="Chillingworth T."/>
            <person name="Churcher C.M."/>
            <person name="Collins M."/>
            <person name="Connor R."/>
            <person name="Cronin A."/>
            <person name="Davis P."/>
            <person name="Feltwell T."/>
            <person name="Fraser A."/>
            <person name="Gentles S."/>
            <person name="Goble A."/>
            <person name="Hamlin N."/>
            <person name="Harris D.E."/>
            <person name="Hidalgo J."/>
            <person name="Hodgson G."/>
            <person name="Holroyd S."/>
            <person name="Hornsby T."/>
            <person name="Howarth S."/>
            <person name="Huckle E.J."/>
            <person name="Hunt S."/>
            <person name="Jagels K."/>
            <person name="James K.D."/>
            <person name="Jones L."/>
            <person name="Jones M."/>
            <person name="Leather S."/>
            <person name="McDonald S."/>
            <person name="McLean J."/>
            <person name="Mooney P."/>
            <person name="Moule S."/>
            <person name="Mungall K.L."/>
            <person name="Murphy L.D."/>
            <person name="Niblett D."/>
            <person name="Odell C."/>
            <person name="Oliver K."/>
            <person name="O'Neil S."/>
            <person name="Pearson D."/>
            <person name="Quail M.A."/>
            <person name="Rabbinowitsch E."/>
            <person name="Rutherford K.M."/>
            <person name="Rutter S."/>
            <person name="Saunders D."/>
            <person name="Seeger K."/>
            <person name="Sharp S."/>
            <person name="Skelton J."/>
            <person name="Simmonds M.N."/>
            <person name="Squares R."/>
            <person name="Squares S."/>
            <person name="Stevens K."/>
            <person name="Taylor K."/>
            <person name="Taylor R.G."/>
            <person name="Tivey A."/>
            <person name="Walsh S.V."/>
            <person name="Warren T."/>
            <person name="Whitehead S."/>
            <person name="Woodward J.R."/>
            <person name="Volckaert G."/>
            <person name="Aert R."/>
            <person name="Robben J."/>
            <person name="Grymonprez B."/>
            <person name="Weltjens I."/>
            <person name="Vanstreels E."/>
            <person name="Rieger M."/>
            <person name="Schaefer M."/>
            <person name="Mueller-Auer S."/>
            <person name="Gabel C."/>
            <person name="Fuchs M."/>
            <person name="Duesterhoeft A."/>
            <person name="Fritzc C."/>
            <person name="Holzer E."/>
            <person name="Moestl D."/>
            <person name="Hilbert H."/>
            <person name="Borzym K."/>
            <person name="Langer I."/>
            <person name="Beck A."/>
            <person name="Lehrach H."/>
            <person name="Reinhardt R."/>
            <person name="Pohl T.M."/>
            <person name="Eger P."/>
            <person name="Zimmermann W."/>
            <person name="Wedler H."/>
            <person name="Wambutt R."/>
            <person name="Purnelle B."/>
            <person name="Goffeau A."/>
            <person name="Cadieu E."/>
            <person name="Dreano S."/>
            <person name="Gloux S."/>
            <person name="Lelaure V."/>
            <person name="Mottier S."/>
            <person name="Galibert F."/>
            <person name="Aves S.J."/>
            <person name="Xiang Z."/>
            <person name="Hunt C."/>
            <person name="Moore K."/>
            <person name="Hurst S.M."/>
            <person name="Lucas M."/>
            <person name="Rochet M."/>
            <person name="Gaillardin C."/>
            <person name="Tallada V.A."/>
            <person name="Garzon A."/>
            <person name="Thode G."/>
            <person name="Daga R.R."/>
            <person name="Cruzado L."/>
            <person name="Jimenez J."/>
            <person name="Sanchez M."/>
            <person name="del Rey F."/>
            <person name="Benito J."/>
            <person name="Dominguez A."/>
            <person name="Revuelta J.L."/>
            <person name="Moreno S."/>
            <person name="Armstrong J."/>
            <person name="Forsburg S.L."/>
            <person name="Cerutti L."/>
            <person name="Lowe T."/>
            <person name="McCombie W.R."/>
            <person name="Paulsen I."/>
            <person name="Potashkin J."/>
            <person name="Shpakovski G.V."/>
            <person name="Ussery D."/>
            <person name="Barrell B.G."/>
            <person name="Nurse P."/>
        </authorList>
    </citation>
    <scope>NUCLEOTIDE SEQUENCE [LARGE SCALE GENOMIC DNA]</scope>
    <source>
        <strain>972 / ATCC 24843</strain>
    </source>
</reference>
<reference key="2">
    <citation type="journal article" date="2011" name="Science">
        <title>Comparative functional genomics of the fission yeasts.</title>
        <authorList>
            <person name="Rhind N."/>
            <person name="Chen Z."/>
            <person name="Yassour M."/>
            <person name="Thompson D.A."/>
            <person name="Haas B.J."/>
            <person name="Habib N."/>
            <person name="Wapinski I."/>
            <person name="Roy S."/>
            <person name="Lin M.F."/>
            <person name="Heiman D.I."/>
            <person name="Young S.K."/>
            <person name="Furuya K."/>
            <person name="Guo Y."/>
            <person name="Pidoux A."/>
            <person name="Chen H.M."/>
            <person name="Robbertse B."/>
            <person name="Goldberg J.M."/>
            <person name="Aoki K."/>
            <person name="Bayne E.H."/>
            <person name="Berlin A.M."/>
            <person name="Desjardins C.A."/>
            <person name="Dobbs E."/>
            <person name="Dukaj L."/>
            <person name="Fan L."/>
            <person name="FitzGerald M.G."/>
            <person name="French C."/>
            <person name="Gujja S."/>
            <person name="Hansen K."/>
            <person name="Keifenheim D."/>
            <person name="Levin J.Z."/>
            <person name="Mosher R.A."/>
            <person name="Mueller C.A."/>
            <person name="Pfiffner J."/>
            <person name="Priest M."/>
            <person name="Russ C."/>
            <person name="Smialowska A."/>
            <person name="Swoboda P."/>
            <person name="Sykes S.M."/>
            <person name="Vaughn M."/>
            <person name="Vengrova S."/>
            <person name="Yoder R."/>
            <person name="Zeng Q."/>
            <person name="Allshire R."/>
            <person name="Baulcombe D."/>
            <person name="Birren B.W."/>
            <person name="Brown W."/>
            <person name="Ekwall K."/>
            <person name="Kellis M."/>
            <person name="Leatherwood J."/>
            <person name="Levin H."/>
            <person name="Margalit H."/>
            <person name="Martienssen R."/>
            <person name="Nieduszynski C.A."/>
            <person name="Spatafora J.W."/>
            <person name="Friedman N."/>
            <person name="Dalgaard J.Z."/>
            <person name="Baumann P."/>
            <person name="Niki H."/>
            <person name="Regev A."/>
            <person name="Nusbaum C."/>
        </authorList>
    </citation>
    <scope>REVISION OF GENE MODEL</scope>
</reference>
<comment type="function">
    <text evidence="1">Mediator of sterol homeostasis involved in sterol uptake, trafficking and distribution into membranes. Also regulates the sphingolipid metabolism (By similarity).</text>
</comment>
<comment type="subcellular location">
    <subcellularLocation>
        <location evidence="1">Endoplasmic reticulum membrane</location>
        <topology evidence="1">Multi-pass membrane protein</topology>
    </subcellularLocation>
    <subcellularLocation>
        <location evidence="1">Golgi apparatus membrane</location>
        <topology evidence="1">Multi-pass membrane protein</topology>
    </subcellularLocation>
</comment>
<comment type="similarity">
    <text evidence="3">Belongs to the ARV1 family.</text>
</comment>
<sequence length="266" mass="30203">MKCVECGAEVDSLYTYYGRGTSNIRLAQCKNCKQFADKYIELDVVLISMDVILMKPQVYRHLLFNSLSARTFRNVVNFCILISLFNVFLVWSRLEKRAALFPYFTPAQAFLSQPIIRQYLTLLLICLVETTVYQISVVLLLCLTMGWKSWTSASGAVILSSSTRMLPVFMVIWDYDLSIAATVVEWVVLFSNVDALCILTGSRRYFKIGLIVLFASLVRSIVVYIFLHLTGLSQIQPSTPCDGFQHFVNLLCVYFRSITLTAQTAV</sequence>
<keyword id="KW-0256">Endoplasmic reticulum</keyword>
<keyword id="KW-0333">Golgi apparatus</keyword>
<keyword id="KW-0443">Lipid metabolism</keyword>
<keyword id="KW-0445">Lipid transport</keyword>
<keyword id="KW-0472">Membrane</keyword>
<keyword id="KW-1185">Reference proteome</keyword>
<keyword id="KW-0746">Sphingolipid metabolism</keyword>
<keyword id="KW-0812">Transmembrane</keyword>
<keyword id="KW-1133">Transmembrane helix</keyword>
<keyword id="KW-0813">Transport</keyword>
<organism>
    <name type="scientific">Schizosaccharomyces pombe (strain 972 / ATCC 24843)</name>
    <name type="common">Fission yeast</name>
    <dbReference type="NCBI Taxonomy" id="284812"/>
    <lineage>
        <taxon>Eukaryota</taxon>
        <taxon>Fungi</taxon>
        <taxon>Dikarya</taxon>
        <taxon>Ascomycota</taxon>
        <taxon>Taphrinomycotina</taxon>
        <taxon>Schizosaccharomycetes</taxon>
        <taxon>Schizosaccharomycetales</taxon>
        <taxon>Schizosaccharomycetaceae</taxon>
        <taxon>Schizosaccharomyces</taxon>
    </lineage>
</organism>